<feature type="chain" id="PRO_0000426953" description="Riboflavin biosynthesis protein RibD">
    <location>
        <begin position="1"/>
        <end position="339"/>
    </location>
</feature>
<feature type="domain" description="CMP/dCMP-type deaminase" evidence="2">
    <location>
        <begin position="7"/>
        <end position="129"/>
    </location>
</feature>
<feature type="region of interest" description="Deaminase">
    <location>
        <begin position="1"/>
        <end position="152"/>
    </location>
</feature>
<feature type="region of interest" description="Reductase">
    <location>
        <begin position="153"/>
        <end position="339"/>
    </location>
</feature>
<feature type="active site" description="Proton donor" evidence="1">
    <location>
        <position position="59"/>
    </location>
</feature>
<feature type="binding site" evidence="1">
    <location>
        <position position="57"/>
    </location>
    <ligand>
        <name>Zn(2+)</name>
        <dbReference type="ChEBI" id="CHEBI:29105"/>
        <note>catalytic</note>
    </ligand>
</feature>
<feature type="binding site" evidence="1">
    <location>
        <position position="82"/>
    </location>
    <ligand>
        <name>Zn(2+)</name>
        <dbReference type="ChEBI" id="CHEBI:29105"/>
        <note>catalytic</note>
    </ligand>
</feature>
<feature type="binding site" evidence="1">
    <location>
        <position position="91"/>
    </location>
    <ligand>
        <name>Zn(2+)</name>
        <dbReference type="ChEBI" id="CHEBI:29105"/>
        <note>catalytic</note>
    </ligand>
</feature>
<feature type="binding site" evidence="1">
    <location>
        <position position="161"/>
    </location>
    <ligand>
        <name>NADP(+)</name>
        <dbReference type="ChEBI" id="CHEBI:58349"/>
    </ligand>
</feature>
<feature type="binding site" evidence="1">
    <location>
        <begin position="168"/>
        <end position="171"/>
    </location>
    <ligand>
        <name>NADP(+)</name>
        <dbReference type="ChEBI" id="CHEBI:58349"/>
    </ligand>
</feature>
<feature type="binding site" evidence="1">
    <location>
        <position position="175"/>
    </location>
    <ligand>
        <name>substrate</name>
    </ligand>
</feature>
<feature type="binding site" evidence="1">
    <location>
        <position position="177"/>
    </location>
    <ligand>
        <name>NADP(+)</name>
        <dbReference type="ChEBI" id="CHEBI:58349"/>
    </ligand>
</feature>
<feature type="binding site" evidence="1">
    <location>
        <position position="191"/>
    </location>
    <ligand>
        <name>substrate</name>
    </ligand>
</feature>
<feature type="binding site" evidence="1">
    <location>
        <position position="203"/>
    </location>
    <ligand>
        <name>NADP(+)</name>
        <dbReference type="ChEBI" id="CHEBI:58349"/>
    </ligand>
</feature>
<feature type="binding site" evidence="1">
    <location>
        <position position="207"/>
    </location>
    <ligand>
        <name>NADP(+)</name>
        <dbReference type="ChEBI" id="CHEBI:58349"/>
    </ligand>
</feature>
<feature type="binding site" evidence="1">
    <location>
        <position position="211"/>
    </location>
    <ligand>
        <name>substrate</name>
    </ligand>
</feature>
<feature type="binding site" evidence="1">
    <location>
        <position position="214"/>
    </location>
    <ligand>
        <name>substrate</name>
    </ligand>
</feature>
<feature type="binding site" evidence="1">
    <location>
        <position position="272"/>
    </location>
    <ligand>
        <name>substrate</name>
    </ligand>
</feature>
<feature type="binding site" evidence="1">
    <location>
        <begin position="274"/>
        <end position="280"/>
    </location>
    <ligand>
        <name>NADP(+)</name>
        <dbReference type="ChEBI" id="CHEBI:58349"/>
    </ligand>
</feature>
<accession>P9WPH0</accession>
<accession>L0T9J7</accession>
<accession>P71677</accession>
<reference key="1">
    <citation type="journal article" date="2002" name="J. Bacteriol.">
        <title>Whole-genome comparison of Mycobacterium tuberculosis clinical and laboratory strains.</title>
        <authorList>
            <person name="Fleischmann R.D."/>
            <person name="Alland D."/>
            <person name="Eisen J.A."/>
            <person name="Carpenter L."/>
            <person name="White O."/>
            <person name="Peterson J.D."/>
            <person name="DeBoy R.T."/>
            <person name="Dodson R.J."/>
            <person name="Gwinn M.L."/>
            <person name="Haft D.H."/>
            <person name="Hickey E.K."/>
            <person name="Kolonay J.F."/>
            <person name="Nelson W.C."/>
            <person name="Umayam L.A."/>
            <person name="Ermolaeva M.D."/>
            <person name="Salzberg S.L."/>
            <person name="Delcher A."/>
            <person name="Utterback T.R."/>
            <person name="Weidman J.F."/>
            <person name="Khouri H.M."/>
            <person name="Gill J."/>
            <person name="Mikula A."/>
            <person name="Bishai W."/>
            <person name="Jacobs W.R. Jr."/>
            <person name="Venter J.C."/>
            <person name="Fraser C.M."/>
        </authorList>
    </citation>
    <scope>NUCLEOTIDE SEQUENCE [LARGE SCALE GENOMIC DNA]</scope>
    <source>
        <strain>CDC 1551 / Oshkosh</strain>
    </source>
</reference>
<organism>
    <name type="scientific">Mycobacterium tuberculosis (strain CDC 1551 / Oshkosh)</name>
    <dbReference type="NCBI Taxonomy" id="83331"/>
    <lineage>
        <taxon>Bacteria</taxon>
        <taxon>Bacillati</taxon>
        <taxon>Actinomycetota</taxon>
        <taxon>Actinomycetes</taxon>
        <taxon>Mycobacteriales</taxon>
        <taxon>Mycobacteriaceae</taxon>
        <taxon>Mycobacterium</taxon>
        <taxon>Mycobacterium tuberculosis complex</taxon>
    </lineage>
</organism>
<keyword id="KW-0378">Hydrolase</keyword>
<keyword id="KW-0479">Metal-binding</keyword>
<keyword id="KW-0511">Multifunctional enzyme</keyword>
<keyword id="KW-0521">NADP</keyword>
<keyword id="KW-0560">Oxidoreductase</keyword>
<keyword id="KW-1185">Reference proteome</keyword>
<keyword id="KW-0686">Riboflavin biosynthesis</keyword>
<keyword id="KW-0862">Zinc</keyword>
<proteinExistence type="inferred from homology"/>
<dbReference type="EC" id="3.5.4.26"/>
<dbReference type="EC" id="1.1.1.193"/>
<dbReference type="EMBL" id="AE000516">
    <property type="protein sequence ID" value="AAK45718.1"/>
    <property type="molecule type" value="Genomic_DNA"/>
</dbReference>
<dbReference type="PIR" id="F70901">
    <property type="entry name" value="F70901"/>
</dbReference>
<dbReference type="RefSeq" id="WP_003898867.1">
    <property type="nucleotide sequence ID" value="NZ_KK341227.1"/>
</dbReference>
<dbReference type="SMR" id="P9WPH0"/>
<dbReference type="KEGG" id="mtc:MT1453"/>
<dbReference type="PATRIC" id="fig|83331.31.peg.1561"/>
<dbReference type="HOGENOM" id="CLU_036590_1_0_11"/>
<dbReference type="UniPathway" id="UPA00275">
    <property type="reaction ID" value="UER00401"/>
</dbReference>
<dbReference type="UniPathway" id="UPA00275">
    <property type="reaction ID" value="UER00402"/>
</dbReference>
<dbReference type="Proteomes" id="UP000001020">
    <property type="component" value="Chromosome"/>
</dbReference>
<dbReference type="GO" id="GO:0008703">
    <property type="term" value="F:5-amino-6-(5-phosphoribosylamino)uracil reductase activity"/>
    <property type="evidence" value="ECO:0007669"/>
    <property type="project" value="UniProtKB-EC"/>
</dbReference>
<dbReference type="GO" id="GO:0008835">
    <property type="term" value="F:diaminohydroxyphosphoribosylaminopyrimidine deaminase activity"/>
    <property type="evidence" value="ECO:0007669"/>
    <property type="project" value="UniProtKB-EC"/>
</dbReference>
<dbReference type="GO" id="GO:0008270">
    <property type="term" value="F:zinc ion binding"/>
    <property type="evidence" value="ECO:0007669"/>
    <property type="project" value="InterPro"/>
</dbReference>
<dbReference type="GO" id="GO:0009231">
    <property type="term" value="P:riboflavin biosynthetic process"/>
    <property type="evidence" value="ECO:0007669"/>
    <property type="project" value="UniProtKB-UniPathway"/>
</dbReference>
<dbReference type="CDD" id="cd01284">
    <property type="entry name" value="Riboflavin_deaminase-reductase"/>
    <property type="match status" value="1"/>
</dbReference>
<dbReference type="Gene3D" id="3.40.140.10">
    <property type="entry name" value="Cytidine Deaminase, domain 2"/>
    <property type="match status" value="1"/>
</dbReference>
<dbReference type="Gene3D" id="3.40.430.10">
    <property type="entry name" value="Dihydrofolate Reductase, subunit A"/>
    <property type="match status" value="1"/>
</dbReference>
<dbReference type="InterPro" id="IPR016192">
    <property type="entry name" value="APOBEC/CMP_deaminase_Zn-bd"/>
</dbReference>
<dbReference type="InterPro" id="IPR002125">
    <property type="entry name" value="CMP_dCMP_dom"/>
</dbReference>
<dbReference type="InterPro" id="IPR016193">
    <property type="entry name" value="Cytidine_deaminase-like"/>
</dbReference>
<dbReference type="InterPro" id="IPR024072">
    <property type="entry name" value="DHFR-like_dom_sf"/>
</dbReference>
<dbReference type="InterPro" id="IPR004794">
    <property type="entry name" value="Eubact_RibD"/>
</dbReference>
<dbReference type="InterPro" id="IPR002734">
    <property type="entry name" value="RibDG_C"/>
</dbReference>
<dbReference type="InterPro" id="IPR050765">
    <property type="entry name" value="Riboflavin_Biosynth_HTPR"/>
</dbReference>
<dbReference type="NCBIfam" id="TIGR00326">
    <property type="entry name" value="eubact_ribD"/>
    <property type="match status" value="1"/>
</dbReference>
<dbReference type="PANTHER" id="PTHR38011:SF7">
    <property type="entry name" value="2,5-DIAMINO-6-RIBOSYLAMINO-4(3H)-PYRIMIDINONE 5'-PHOSPHATE REDUCTASE"/>
    <property type="match status" value="1"/>
</dbReference>
<dbReference type="PANTHER" id="PTHR38011">
    <property type="entry name" value="DIHYDROFOLATE REDUCTASE FAMILY PROTEIN (AFU_ORTHOLOGUE AFUA_8G06820)"/>
    <property type="match status" value="1"/>
</dbReference>
<dbReference type="Pfam" id="PF00383">
    <property type="entry name" value="dCMP_cyt_deam_1"/>
    <property type="match status" value="1"/>
</dbReference>
<dbReference type="Pfam" id="PF01872">
    <property type="entry name" value="RibD_C"/>
    <property type="match status" value="1"/>
</dbReference>
<dbReference type="PIRSF" id="PIRSF006769">
    <property type="entry name" value="RibD"/>
    <property type="match status" value="1"/>
</dbReference>
<dbReference type="SUPFAM" id="SSF53927">
    <property type="entry name" value="Cytidine deaminase-like"/>
    <property type="match status" value="1"/>
</dbReference>
<dbReference type="SUPFAM" id="SSF53597">
    <property type="entry name" value="Dihydrofolate reductase-like"/>
    <property type="match status" value="1"/>
</dbReference>
<dbReference type="PROSITE" id="PS00903">
    <property type="entry name" value="CYT_DCMP_DEAMINASES_1"/>
    <property type="match status" value="1"/>
</dbReference>
<dbReference type="PROSITE" id="PS51747">
    <property type="entry name" value="CYT_DCMP_DEAMINASES_2"/>
    <property type="match status" value="1"/>
</dbReference>
<protein>
    <recommendedName>
        <fullName>Riboflavin biosynthesis protein RibD</fullName>
    </recommendedName>
    <domain>
        <recommendedName>
            <fullName>Diaminohydroxyphosphoribosylaminopyrimidine deaminase</fullName>
            <shortName>DRAP deaminase</shortName>
            <ecNumber>3.5.4.26</ecNumber>
        </recommendedName>
        <alternativeName>
            <fullName>Riboflavin-specific deaminase</fullName>
        </alternativeName>
    </domain>
    <domain>
        <recommendedName>
            <fullName>5-amino-6-(5-phosphoribosylamino)uracil reductase</fullName>
            <ecNumber>1.1.1.193</ecNumber>
        </recommendedName>
        <alternativeName>
            <fullName>HTP reductase</fullName>
        </alternativeName>
    </domain>
</protein>
<name>RIBD_MYCTO</name>
<gene>
    <name type="primary">ribD</name>
    <name type="synonym">ribG</name>
    <name type="ordered locus">MT1453</name>
</gene>
<comment type="function">
    <text evidence="1">Converts 2,5-diamino-6-(ribosylamino)-4(3h)-pyrimidinone 5'-phosphate into 5-amino-6-(ribosylamino)-2,4(1h,3h)-pyrimidinedione 5'-phosphate.</text>
</comment>
<comment type="catalytic activity">
    <reaction>
        <text>2,5-diamino-6-hydroxy-4-(5-phosphoribosylamino)-pyrimidine + H2O + H(+) = 5-amino-6-(5-phospho-D-ribosylamino)uracil + NH4(+)</text>
        <dbReference type="Rhea" id="RHEA:21868"/>
        <dbReference type="ChEBI" id="CHEBI:15377"/>
        <dbReference type="ChEBI" id="CHEBI:15378"/>
        <dbReference type="ChEBI" id="CHEBI:28938"/>
        <dbReference type="ChEBI" id="CHEBI:58453"/>
        <dbReference type="ChEBI" id="CHEBI:58614"/>
        <dbReference type="EC" id="3.5.4.26"/>
    </reaction>
</comment>
<comment type="catalytic activity">
    <reaction>
        <text>5-amino-6-(5-phospho-D-ribitylamino)uracil + NADP(+) = 5-amino-6-(5-phospho-D-ribosylamino)uracil + NADPH + H(+)</text>
        <dbReference type="Rhea" id="RHEA:17845"/>
        <dbReference type="ChEBI" id="CHEBI:15378"/>
        <dbReference type="ChEBI" id="CHEBI:57783"/>
        <dbReference type="ChEBI" id="CHEBI:58349"/>
        <dbReference type="ChEBI" id="CHEBI:58421"/>
        <dbReference type="ChEBI" id="CHEBI:58453"/>
        <dbReference type="EC" id="1.1.1.193"/>
    </reaction>
</comment>
<comment type="cofactor">
    <cofactor evidence="1">
        <name>Zn(2+)</name>
        <dbReference type="ChEBI" id="CHEBI:29105"/>
    </cofactor>
    <text evidence="1">Binds 1 zinc ion.</text>
</comment>
<comment type="pathway">
    <text>Cofactor biosynthesis; riboflavin biosynthesis; 5-amino-6-(D-ribitylamino)uracil from GTP: step 2/4.</text>
</comment>
<comment type="pathway">
    <text>Cofactor biosynthesis; riboflavin biosynthesis; 5-amino-6-(D-ribitylamino)uracil from GTP: step 3/4.</text>
</comment>
<comment type="similarity">
    <text evidence="3">In the N-terminal section; belongs to the cytidine and deoxycytidylate deaminase family.</text>
</comment>
<comment type="similarity">
    <text evidence="3">In the C-terminal section; belongs to the HTP reductase family.</text>
</comment>
<evidence type="ECO:0000250" key="1"/>
<evidence type="ECO:0000255" key="2">
    <source>
        <dbReference type="PROSITE-ProRule" id="PRU01083"/>
    </source>
</evidence>
<evidence type="ECO:0000305" key="3"/>
<sequence>MNVEQVKSIDEAMGLAIEHSYQVKGTTYPKPPVGAVIVDPNGRIVGAGGTEPAGGDHAEVVALRRAGGLAAGAIVVVTMEPCNHYGKTPPCVNALIEARVGTVVYAVADPNGIAGGGAGRLSAAGLQVRSGVLAEQVAAGPLREWLHKQRTGLPHVTWKYATSIDGRSAAADGSSQWISSEAARLDLHRRRAIADAILVGTGTVLADDPALTARLADGSLAPQQPLRVVVGKRDIPPEARVLNDEARTMMIRTHEPMEVLRALSDRTDVLLEGGPTLAGAFLRAGAINRILAYVAPILLGGPVTAVDDVGVSNITNALRWQFDSVEKVGPDLLLSLVAR</sequence>